<dbReference type="EC" id="1.16.3.1"/>
<dbReference type="EMBL" id="AAFI02000200">
    <property type="protein sequence ID" value="EAL60822.1"/>
    <property type="molecule type" value="Genomic_DNA"/>
</dbReference>
<dbReference type="RefSeq" id="XP_629221.1">
    <property type="nucleotide sequence ID" value="XM_629219.1"/>
</dbReference>
<dbReference type="SMR" id="Q54C45"/>
<dbReference type="FunCoup" id="Q54C45">
    <property type="interactions" value="205"/>
</dbReference>
<dbReference type="STRING" id="44689.Q54C45"/>
<dbReference type="PaxDb" id="44689-DDB0266646"/>
<dbReference type="EnsemblProtists" id="EAL60822">
    <property type="protein sequence ID" value="EAL60822"/>
    <property type="gene ID" value="DDB_G0293246"/>
</dbReference>
<dbReference type="GeneID" id="8629103"/>
<dbReference type="KEGG" id="ddi:DDB_G0293246"/>
<dbReference type="dictyBase" id="DDB_G0293246">
    <property type="gene designation" value="fxn"/>
</dbReference>
<dbReference type="VEuPathDB" id="AmoebaDB:DDB_G0293246"/>
<dbReference type="eggNOG" id="KOG3413">
    <property type="taxonomic scope" value="Eukaryota"/>
</dbReference>
<dbReference type="HOGENOM" id="CLU_080880_2_4_1"/>
<dbReference type="InParanoid" id="Q54C45"/>
<dbReference type="OMA" id="QWIDNID"/>
<dbReference type="PhylomeDB" id="Q54C45"/>
<dbReference type="Reactome" id="R-DDI-1362409">
    <property type="pathway name" value="Mitochondrial iron-sulfur cluster biogenesis"/>
</dbReference>
<dbReference type="Reactome" id="R-DDI-9854311">
    <property type="pathway name" value="Maturation of TCA enzymes and regulation of TCA cycle"/>
</dbReference>
<dbReference type="Reactome" id="R-DDI-9865881">
    <property type="pathway name" value="Complex III assembly"/>
</dbReference>
<dbReference type="PRO" id="PR:Q54C45"/>
<dbReference type="Proteomes" id="UP000002195">
    <property type="component" value="Chromosome 6"/>
</dbReference>
<dbReference type="GO" id="GO:0005739">
    <property type="term" value="C:mitochondrion"/>
    <property type="evidence" value="ECO:0000250"/>
    <property type="project" value="dictyBase"/>
</dbReference>
<dbReference type="GO" id="GO:0051537">
    <property type="term" value="F:2 iron, 2 sulfur cluster binding"/>
    <property type="evidence" value="ECO:0000318"/>
    <property type="project" value="GO_Central"/>
</dbReference>
<dbReference type="GO" id="GO:0008199">
    <property type="term" value="F:ferric iron binding"/>
    <property type="evidence" value="ECO:0000318"/>
    <property type="project" value="GO_Central"/>
</dbReference>
<dbReference type="GO" id="GO:0008198">
    <property type="term" value="F:ferrous iron binding"/>
    <property type="evidence" value="ECO:0000250"/>
    <property type="project" value="dictyBase"/>
</dbReference>
<dbReference type="GO" id="GO:0004322">
    <property type="term" value="F:ferroxidase activity"/>
    <property type="evidence" value="ECO:0000318"/>
    <property type="project" value="GO_Central"/>
</dbReference>
<dbReference type="GO" id="GO:0034986">
    <property type="term" value="F:iron chaperone activity"/>
    <property type="evidence" value="ECO:0000318"/>
    <property type="project" value="GO_Central"/>
</dbReference>
<dbReference type="GO" id="GO:0006783">
    <property type="term" value="P:heme biosynthetic process"/>
    <property type="evidence" value="ECO:0007669"/>
    <property type="project" value="UniProtKB-KW"/>
</dbReference>
<dbReference type="GO" id="GO:0006879">
    <property type="term" value="P:intracellular iron ion homeostasis"/>
    <property type="evidence" value="ECO:0000250"/>
    <property type="project" value="dictyBase"/>
</dbReference>
<dbReference type="GO" id="GO:0006826">
    <property type="term" value="P:iron ion transport"/>
    <property type="evidence" value="ECO:0007669"/>
    <property type="project" value="UniProtKB-KW"/>
</dbReference>
<dbReference type="GO" id="GO:0016226">
    <property type="term" value="P:iron-sulfur cluster assembly"/>
    <property type="evidence" value="ECO:0000250"/>
    <property type="project" value="dictyBase"/>
</dbReference>
<dbReference type="FunFam" id="3.30.920.10:FF:000014">
    <property type="entry name" value="Frataxin, mitochondrial"/>
    <property type="match status" value="1"/>
</dbReference>
<dbReference type="Gene3D" id="3.30.920.10">
    <property type="entry name" value="Frataxin/CyaY"/>
    <property type="match status" value="1"/>
</dbReference>
<dbReference type="InterPro" id="IPR017789">
    <property type="entry name" value="Frataxin"/>
</dbReference>
<dbReference type="InterPro" id="IPR002908">
    <property type="entry name" value="Frataxin/CyaY"/>
</dbReference>
<dbReference type="InterPro" id="IPR036524">
    <property type="entry name" value="Frataxin/CyaY_sf"/>
</dbReference>
<dbReference type="InterPro" id="IPR020895">
    <property type="entry name" value="Frataxin_CS"/>
</dbReference>
<dbReference type="NCBIfam" id="TIGR03421">
    <property type="entry name" value="FeS_CyaY"/>
    <property type="match status" value="1"/>
</dbReference>
<dbReference type="NCBIfam" id="TIGR03422">
    <property type="entry name" value="mito_frataxin"/>
    <property type="match status" value="1"/>
</dbReference>
<dbReference type="PANTHER" id="PTHR16821">
    <property type="entry name" value="FRATAXIN"/>
    <property type="match status" value="1"/>
</dbReference>
<dbReference type="PANTHER" id="PTHR16821:SF2">
    <property type="entry name" value="FRATAXIN, MITOCHONDRIAL"/>
    <property type="match status" value="1"/>
</dbReference>
<dbReference type="Pfam" id="PF01491">
    <property type="entry name" value="Frataxin_Cyay"/>
    <property type="match status" value="1"/>
</dbReference>
<dbReference type="SMART" id="SM01219">
    <property type="entry name" value="Frataxin_Cyay"/>
    <property type="match status" value="1"/>
</dbReference>
<dbReference type="SUPFAM" id="SSF55387">
    <property type="entry name" value="Frataxin/Nqo15-like"/>
    <property type="match status" value="1"/>
</dbReference>
<dbReference type="PROSITE" id="PS01344">
    <property type="entry name" value="FRATAXIN_1"/>
    <property type="match status" value="1"/>
</dbReference>
<dbReference type="PROSITE" id="PS50810">
    <property type="entry name" value="FRATAXIN_2"/>
    <property type="match status" value="1"/>
</dbReference>
<proteinExistence type="inferred from homology"/>
<organism>
    <name type="scientific">Dictyostelium discoideum</name>
    <name type="common">Social amoeba</name>
    <dbReference type="NCBI Taxonomy" id="44689"/>
    <lineage>
        <taxon>Eukaryota</taxon>
        <taxon>Amoebozoa</taxon>
        <taxon>Evosea</taxon>
        <taxon>Eumycetozoa</taxon>
        <taxon>Dictyostelia</taxon>
        <taxon>Dictyosteliales</taxon>
        <taxon>Dictyosteliaceae</taxon>
        <taxon>Dictyostelium</taxon>
    </lineage>
</organism>
<sequence>MIFNFLNKASNKTHTKLLLFSSIRNRILINNISSTSKWSSINNNNKQSSVSKTNIFIITTHNKQQQQLSKSFSTINNNTKPISDVNLFHDIVDEEFELFVDRLEILSEANTCEGFEVEGNDGVLTIIVGNKGTYVINKQTPNRQIWWSSPLSGPKRFDYDSVEKRWVDNRDGTPLRQLLNSEINTLCKYDMEI</sequence>
<gene>
    <name type="primary">fxn</name>
    <name type="ORF">DDB_G0293246</name>
</gene>
<feature type="transit peptide" description="Mitochondrion" evidence="3">
    <location>
        <begin position="1"/>
        <end position="72"/>
    </location>
</feature>
<feature type="chain" id="PRO_0000328230" description="Frataxin, mitochondrial">
    <location>
        <begin position="73"/>
        <end position="193"/>
    </location>
</feature>
<comment type="function">
    <text evidence="1">Promotes the biosynthesis of heme as well as the assembly and repair of iron-sulfur clusters by delivering Fe(2+) to proteins involved in these pathways. May play a role in the protection against iron-catalyzed oxidative stress through its ability to catalyze the oxidation of Fe(2+) to Fe(3+). May be able to store large amounts of the metal in the form of a ferrihydrite mineral by oligomerization (By similarity).</text>
</comment>
<comment type="catalytic activity">
    <reaction>
        <text>4 Fe(2+) + O2 + 4 H(+) = 4 Fe(3+) + 2 H2O</text>
        <dbReference type="Rhea" id="RHEA:11148"/>
        <dbReference type="ChEBI" id="CHEBI:15377"/>
        <dbReference type="ChEBI" id="CHEBI:15378"/>
        <dbReference type="ChEBI" id="CHEBI:15379"/>
        <dbReference type="ChEBI" id="CHEBI:29033"/>
        <dbReference type="ChEBI" id="CHEBI:29034"/>
        <dbReference type="EC" id="1.16.3.1"/>
    </reaction>
</comment>
<comment type="subunit">
    <text evidence="1">Monomer. Oligomer (By similarity).</text>
</comment>
<comment type="subcellular location">
    <subcellularLocation>
        <location evidence="2">Mitochondrion</location>
    </subcellularLocation>
</comment>
<comment type="similarity">
    <text evidence="4">Belongs to the frataxin family.</text>
</comment>
<reference key="1">
    <citation type="journal article" date="2005" name="Nature">
        <title>The genome of the social amoeba Dictyostelium discoideum.</title>
        <authorList>
            <person name="Eichinger L."/>
            <person name="Pachebat J.A."/>
            <person name="Gloeckner G."/>
            <person name="Rajandream M.A."/>
            <person name="Sucgang R."/>
            <person name="Berriman M."/>
            <person name="Song J."/>
            <person name="Olsen R."/>
            <person name="Szafranski K."/>
            <person name="Xu Q."/>
            <person name="Tunggal B."/>
            <person name="Kummerfeld S."/>
            <person name="Madera M."/>
            <person name="Konfortov B.A."/>
            <person name="Rivero F."/>
            <person name="Bankier A.T."/>
            <person name="Lehmann R."/>
            <person name="Hamlin N."/>
            <person name="Davies R."/>
            <person name="Gaudet P."/>
            <person name="Fey P."/>
            <person name="Pilcher K."/>
            <person name="Chen G."/>
            <person name="Saunders D."/>
            <person name="Sodergren E.J."/>
            <person name="Davis P."/>
            <person name="Kerhornou A."/>
            <person name="Nie X."/>
            <person name="Hall N."/>
            <person name="Anjard C."/>
            <person name="Hemphill L."/>
            <person name="Bason N."/>
            <person name="Farbrother P."/>
            <person name="Desany B."/>
            <person name="Just E."/>
            <person name="Morio T."/>
            <person name="Rost R."/>
            <person name="Churcher C.M."/>
            <person name="Cooper J."/>
            <person name="Haydock S."/>
            <person name="van Driessche N."/>
            <person name="Cronin A."/>
            <person name="Goodhead I."/>
            <person name="Muzny D.M."/>
            <person name="Mourier T."/>
            <person name="Pain A."/>
            <person name="Lu M."/>
            <person name="Harper D."/>
            <person name="Lindsay R."/>
            <person name="Hauser H."/>
            <person name="James K.D."/>
            <person name="Quiles M."/>
            <person name="Madan Babu M."/>
            <person name="Saito T."/>
            <person name="Buchrieser C."/>
            <person name="Wardroper A."/>
            <person name="Felder M."/>
            <person name="Thangavelu M."/>
            <person name="Johnson D."/>
            <person name="Knights A."/>
            <person name="Loulseged H."/>
            <person name="Mungall K.L."/>
            <person name="Oliver K."/>
            <person name="Price C."/>
            <person name="Quail M.A."/>
            <person name="Urushihara H."/>
            <person name="Hernandez J."/>
            <person name="Rabbinowitsch E."/>
            <person name="Steffen D."/>
            <person name="Sanders M."/>
            <person name="Ma J."/>
            <person name="Kohara Y."/>
            <person name="Sharp S."/>
            <person name="Simmonds M.N."/>
            <person name="Spiegler S."/>
            <person name="Tivey A."/>
            <person name="Sugano S."/>
            <person name="White B."/>
            <person name="Walker D."/>
            <person name="Woodward J.R."/>
            <person name="Winckler T."/>
            <person name="Tanaka Y."/>
            <person name="Shaulsky G."/>
            <person name="Schleicher M."/>
            <person name="Weinstock G.M."/>
            <person name="Rosenthal A."/>
            <person name="Cox E.C."/>
            <person name="Chisholm R.L."/>
            <person name="Gibbs R.A."/>
            <person name="Loomis W.F."/>
            <person name="Platzer M."/>
            <person name="Kay R.R."/>
            <person name="Williams J.G."/>
            <person name="Dear P.H."/>
            <person name="Noegel A.A."/>
            <person name="Barrell B.G."/>
            <person name="Kuspa A."/>
        </authorList>
    </citation>
    <scope>NUCLEOTIDE SEQUENCE [LARGE SCALE GENOMIC DNA]</scope>
    <source>
        <strain>AX4</strain>
    </source>
</reference>
<protein>
    <recommendedName>
        <fullName>Frataxin, mitochondrial</fullName>
        <shortName>Fxn</shortName>
        <ecNumber>1.16.3.1</ecNumber>
    </recommendedName>
</protein>
<accession>Q54C45</accession>
<evidence type="ECO:0000250" key="1"/>
<evidence type="ECO:0000250" key="2">
    <source>
        <dbReference type="UniProtKB" id="Q16595"/>
    </source>
</evidence>
<evidence type="ECO:0000255" key="3"/>
<evidence type="ECO:0000305" key="4"/>
<keyword id="KW-0350">Heme biosynthesis</keyword>
<keyword id="KW-0406">Ion transport</keyword>
<keyword id="KW-0408">Iron</keyword>
<keyword id="KW-0409">Iron storage</keyword>
<keyword id="KW-0410">Iron transport</keyword>
<keyword id="KW-0496">Mitochondrion</keyword>
<keyword id="KW-0560">Oxidoreductase</keyword>
<keyword id="KW-1185">Reference proteome</keyword>
<keyword id="KW-0809">Transit peptide</keyword>
<keyword id="KW-0813">Transport</keyword>
<name>FRDA_DICDI</name>